<proteinExistence type="inferred from homology"/>
<feature type="chain" id="PRO_1000122146" description="Integration host factor subunit alpha">
    <location>
        <begin position="1"/>
        <end position="108"/>
    </location>
</feature>
<dbReference type="EMBL" id="CP000908">
    <property type="protein sequence ID" value="ABY30451.1"/>
    <property type="molecule type" value="Genomic_DNA"/>
</dbReference>
<dbReference type="RefSeq" id="WP_003598011.1">
    <property type="nucleotide sequence ID" value="NC_010172.1"/>
</dbReference>
<dbReference type="SMR" id="A9W4E5"/>
<dbReference type="KEGG" id="mex:Mext_2055"/>
<dbReference type="eggNOG" id="COG0776">
    <property type="taxonomic scope" value="Bacteria"/>
</dbReference>
<dbReference type="HOGENOM" id="CLU_105066_1_1_5"/>
<dbReference type="BioCyc" id="MEXT419610:MEXT_RS10380-MONOMER"/>
<dbReference type="GO" id="GO:0005829">
    <property type="term" value="C:cytosol"/>
    <property type="evidence" value="ECO:0007669"/>
    <property type="project" value="TreeGrafter"/>
</dbReference>
<dbReference type="GO" id="GO:0003677">
    <property type="term" value="F:DNA binding"/>
    <property type="evidence" value="ECO:0007669"/>
    <property type="project" value="UniProtKB-UniRule"/>
</dbReference>
<dbReference type="GO" id="GO:0030527">
    <property type="term" value="F:structural constituent of chromatin"/>
    <property type="evidence" value="ECO:0007669"/>
    <property type="project" value="InterPro"/>
</dbReference>
<dbReference type="GO" id="GO:0006310">
    <property type="term" value="P:DNA recombination"/>
    <property type="evidence" value="ECO:0007669"/>
    <property type="project" value="UniProtKB-UniRule"/>
</dbReference>
<dbReference type="GO" id="GO:0009893">
    <property type="term" value="P:positive regulation of metabolic process"/>
    <property type="evidence" value="ECO:0007669"/>
    <property type="project" value="UniProtKB-ARBA"/>
</dbReference>
<dbReference type="GO" id="GO:0006355">
    <property type="term" value="P:regulation of DNA-templated transcription"/>
    <property type="evidence" value="ECO:0007669"/>
    <property type="project" value="UniProtKB-UniRule"/>
</dbReference>
<dbReference type="GO" id="GO:0006417">
    <property type="term" value="P:regulation of translation"/>
    <property type="evidence" value="ECO:0007669"/>
    <property type="project" value="UniProtKB-UniRule"/>
</dbReference>
<dbReference type="CDD" id="cd13835">
    <property type="entry name" value="IHF_A"/>
    <property type="match status" value="1"/>
</dbReference>
<dbReference type="FunFam" id="4.10.520.10:FF:000010">
    <property type="entry name" value="Integration host factor subunit alpha"/>
    <property type="match status" value="1"/>
</dbReference>
<dbReference type="Gene3D" id="4.10.520.10">
    <property type="entry name" value="IHF-like DNA-binding proteins"/>
    <property type="match status" value="1"/>
</dbReference>
<dbReference type="HAMAP" id="MF_00380">
    <property type="entry name" value="IHF_alpha"/>
    <property type="match status" value="1"/>
</dbReference>
<dbReference type="InterPro" id="IPR000119">
    <property type="entry name" value="Hist_DNA-bd"/>
</dbReference>
<dbReference type="InterPro" id="IPR020816">
    <property type="entry name" value="Histone-like_DNA-bd_CS"/>
</dbReference>
<dbReference type="InterPro" id="IPR010992">
    <property type="entry name" value="IHF-like_DNA-bd_dom_sf"/>
</dbReference>
<dbReference type="InterPro" id="IPR005684">
    <property type="entry name" value="IHF_alpha"/>
</dbReference>
<dbReference type="NCBIfam" id="NF001401">
    <property type="entry name" value="PRK00285.1"/>
    <property type="match status" value="1"/>
</dbReference>
<dbReference type="PANTHER" id="PTHR33175">
    <property type="entry name" value="DNA-BINDING PROTEIN HU"/>
    <property type="match status" value="1"/>
</dbReference>
<dbReference type="PANTHER" id="PTHR33175:SF2">
    <property type="entry name" value="INTEGRATION HOST FACTOR SUBUNIT ALPHA"/>
    <property type="match status" value="1"/>
</dbReference>
<dbReference type="Pfam" id="PF00216">
    <property type="entry name" value="Bac_DNA_binding"/>
    <property type="match status" value="1"/>
</dbReference>
<dbReference type="PRINTS" id="PR01727">
    <property type="entry name" value="DNABINDINGHU"/>
</dbReference>
<dbReference type="SMART" id="SM00411">
    <property type="entry name" value="BHL"/>
    <property type="match status" value="1"/>
</dbReference>
<dbReference type="SUPFAM" id="SSF47729">
    <property type="entry name" value="IHF-like DNA-binding proteins"/>
    <property type="match status" value="1"/>
</dbReference>
<dbReference type="PROSITE" id="PS00045">
    <property type="entry name" value="HISTONE_LIKE"/>
    <property type="match status" value="1"/>
</dbReference>
<name>IHFA_METEP</name>
<comment type="function">
    <text evidence="1">This protein is one of the two subunits of integration host factor, a specific DNA-binding protein that functions in genetic recombination as well as in transcriptional and translational control.</text>
</comment>
<comment type="subunit">
    <text evidence="1">Heterodimer of an alpha and a beta chain.</text>
</comment>
<comment type="similarity">
    <text evidence="1">Belongs to the bacterial histone-like protein family.</text>
</comment>
<evidence type="ECO:0000255" key="1">
    <source>
        <dbReference type="HAMAP-Rule" id="MF_00380"/>
    </source>
</evidence>
<keyword id="KW-0233">DNA recombination</keyword>
<keyword id="KW-0238">DNA-binding</keyword>
<keyword id="KW-0804">Transcription</keyword>
<keyword id="KW-0805">Transcription regulation</keyword>
<keyword id="KW-0810">Translation regulation</keyword>
<organism>
    <name type="scientific">Methylorubrum extorquens (strain PA1)</name>
    <name type="common">Methylobacterium extorquens</name>
    <dbReference type="NCBI Taxonomy" id="419610"/>
    <lineage>
        <taxon>Bacteria</taxon>
        <taxon>Pseudomonadati</taxon>
        <taxon>Pseudomonadota</taxon>
        <taxon>Alphaproteobacteria</taxon>
        <taxon>Hyphomicrobiales</taxon>
        <taxon>Methylobacteriaceae</taxon>
        <taxon>Methylorubrum</taxon>
    </lineage>
</organism>
<gene>
    <name evidence="1" type="primary">ihfA</name>
    <name evidence="1" type="synonym">himA</name>
    <name type="ordered locus">Mext_2055</name>
</gene>
<accession>A9W4E5</accession>
<sequence>MAGKTVTRADLSEAVYQQVGLSRAESAALVETVLAEICTCLSSGETVKLSSFGSFVVRSKGKRIGRNPKTGVEVEIEPRQVMVFKPSNVLKARINGGHVNGLDMDEDE</sequence>
<protein>
    <recommendedName>
        <fullName evidence="1">Integration host factor subunit alpha</fullName>
        <shortName evidence="1">IHF-alpha</shortName>
    </recommendedName>
</protein>
<reference key="1">
    <citation type="submission" date="2007-12" db="EMBL/GenBank/DDBJ databases">
        <title>Complete sequence of Methylobacterium extorquens PA1.</title>
        <authorList>
            <consortium name="US DOE Joint Genome Institute"/>
            <person name="Copeland A."/>
            <person name="Lucas S."/>
            <person name="Lapidus A."/>
            <person name="Barry K."/>
            <person name="Glavina del Rio T."/>
            <person name="Dalin E."/>
            <person name="Tice H."/>
            <person name="Pitluck S."/>
            <person name="Saunders E."/>
            <person name="Brettin T."/>
            <person name="Bruce D."/>
            <person name="Detter J.C."/>
            <person name="Han C."/>
            <person name="Schmutz J."/>
            <person name="Larimer F."/>
            <person name="Land M."/>
            <person name="Hauser L."/>
            <person name="Kyrpides N."/>
            <person name="Kim E."/>
            <person name="Marx C."/>
            <person name="Richardson P."/>
        </authorList>
    </citation>
    <scope>NUCLEOTIDE SEQUENCE [LARGE SCALE GENOMIC DNA]</scope>
    <source>
        <strain>PA1</strain>
    </source>
</reference>